<reference key="1">
    <citation type="journal article" date="2004" name="Nat. Genet.">
        <title>Complete sequencing and characterization of 21,243 full-length human cDNAs.</title>
        <authorList>
            <person name="Ota T."/>
            <person name="Suzuki Y."/>
            <person name="Nishikawa T."/>
            <person name="Otsuki T."/>
            <person name="Sugiyama T."/>
            <person name="Irie R."/>
            <person name="Wakamatsu A."/>
            <person name="Hayashi K."/>
            <person name="Sato H."/>
            <person name="Nagai K."/>
            <person name="Kimura K."/>
            <person name="Makita H."/>
            <person name="Sekine M."/>
            <person name="Obayashi M."/>
            <person name="Nishi T."/>
            <person name="Shibahara T."/>
            <person name="Tanaka T."/>
            <person name="Ishii S."/>
            <person name="Yamamoto J."/>
            <person name="Saito K."/>
            <person name="Kawai Y."/>
            <person name="Isono Y."/>
            <person name="Nakamura Y."/>
            <person name="Nagahari K."/>
            <person name="Murakami K."/>
            <person name="Yasuda T."/>
            <person name="Iwayanagi T."/>
            <person name="Wagatsuma M."/>
            <person name="Shiratori A."/>
            <person name="Sudo H."/>
            <person name="Hosoiri T."/>
            <person name="Kaku Y."/>
            <person name="Kodaira H."/>
            <person name="Kondo H."/>
            <person name="Sugawara M."/>
            <person name="Takahashi M."/>
            <person name="Kanda K."/>
            <person name="Yokoi T."/>
            <person name="Furuya T."/>
            <person name="Kikkawa E."/>
            <person name="Omura Y."/>
            <person name="Abe K."/>
            <person name="Kamihara K."/>
            <person name="Katsuta N."/>
            <person name="Sato K."/>
            <person name="Tanikawa M."/>
            <person name="Yamazaki M."/>
            <person name="Ninomiya K."/>
            <person name="Ishibashi T."/>
            <person name="Yamashita H."/>
            <person name="Murakawa K."/>
            <person name="Fujimori K."/>
            <person name="Tanai H."/>
            <person name="Kimata M."/>
            <person name="Watanabe M."/>
            <person name="Hiraoka S."/>
            <person name="Chiba Y."/>
            <person name="Ishida S."/>
            <person name="Ono Y."/>
            <person name="Takiguchi S."/>
            <person name="Watanabe S."/>
            <person name="Yosida M."/>
            <person name="Hotuta T."/>
            <person name="Kusano J."/>
            <person name="Kanehori K."/>
            <person name="Takahashi-Fujii A."/>
            <person name="Hara H."/>
            <person name="Tanase T.-O."/>
            <person name="Nomura Y."/>
            <person name="Togiya S."/>
            <person name="Komai F."/>
            <person name="Hara R."/>
            <person name="Takeuchi K."/>
            <person name="Arita M."/>
            <person name="Imose N."/>
            <person name="Musashino K."/>
            <person name="Yuuki H."/>
            <person name="Oshima A."/>
            <person name="Sasaki N."/>
            <person name="Aotsuka S."/>
            <person name="Yoshikawa Y."/>
            <person name="Matsunawa H."/>
            <person name="Ichihara T."/>
            <person name="Shiohata N."/>
            <person name="Sano S."/>
            <person name="Moriya S."/>
            <person name="Momiyama H."/>
            <person name="Satoh N."/>
            <person name="Takami S."/>
            <person name="Terashima Y."/>
            <person name="Suzuki O."/>
            <person name="Nakagawa S."/>
            <person name="Senoh A."/>
            <person name="Mizoguchi H."/>
            <person name="Goto Y."/>
            <person name="Shimizu F."/>
            <person name="Wakebe H."/>
            <person name="Hishigaki H."/>
            <person name="Watanabe T."/>
            <person name="Sugiyama A."/>
            <person name="Takemoto M."/>
            <person name="Kawakami B."/>
            <person name="Yamazaki M."/>
            <person name="Watanabe K."/>
            <person name="Kumagai A."/>
            <person name="Itakura S."/>
            <person name="Fukuzumi Y."/>
            <person name="Fujimori Y."/>
            <person name="Komiyama M."/>
            <person name="Tashiro H."/>
            <person name="Tanigami A."/>
            <person name="Fujiwara T."/>
            <person name="Ono T."/>
            <person name="Yamada K."/>
            <person name="Fujii Y."/>
            <person name="Ozaki K."/>
            <person name="Hirao M."/>
            <person name="Ohmori Y."/>
            <person name="Kawabata A."/>
            <person name="Hikiji T."/>
            <person name="Kobatake N."/>
            <person name="Inagaki H."/>
            <person name="Ikema Y."/>
            <person name="Okamoto S."/>
            <person name="Okitani R."/>
            <person name="Kawakami T."/>
            <person name="Noguchi S."/>
            <person name="Itoh T."/>
            <person name="Shigeta K."/>
            <person name="Senba T."/>
            <person name="Matsumura K."/>
            <person name="Nakajima Y."/>
            <person name="Mizuno T."/>
            <person name="Morinaga M."/>
            <person name="Sasaki M."/>
            <person name="Togashi T."/>
            <person name="Oyama M."/>
            <person name="Hata H."/>
            <person name="Watanabe M."/>
            <person name="Komatsu T."/>
            <person name="Mizushima-Sugano J."/>
            <person name="Satoh T."/>
            <person name="Shirai Y."/>
            <person name="Takahashi Y."/>
            <person name="Nakagawa K."/>
            <person name="Okumura K."/>
            <person name="Nagase T."/>
            <person name="Nomura N."/>
            <person name="Kikuchi H."/>
            <person name="Masuho Y."/>
            <person name="Yamashita R."/>
            <person name="Nakai K."/>
            <person name="Yada T."/>
            <person name="Nakamura Y."/>
            <person name="Ohara O."/>
            <person name="Isogai T."/>
            <person name="Sugano S."/>
        </authorList>
    </citation>
    <scope>NUCLEOTIDE SEQUENCE [LARGE SCALE MRNA]</scope>
    <source>
        <tissue>Thymus</tissue>
    </source>
</reference>
<organism>
    <name type="scientific">Homo sapiens</name>
    <name type="common">Human</name>
    <dbReference type="NCBI Taxonomy" id="9606"/>
    <lineage>
        <taxon>Eukaryota</taxon>
        <taxon>Metazoa</taxon>
        <taxon>Chordata</taxon>
        <taxon>Craniata</taxon>
        <taxon>Vertebrata</taxon>
        <taxon>Euteleostomi</taxon>
        <taxon>Mammalia</taxon>
        <taxon>Eutheria</taxon>
        <taxon>Euarchontoglires</taxon>
        <taxon>Primates</taxon>
        <taxon>Haplorrhini</taxon>
        <taxon>Catarrhini</taxon>
        <taxon>Hominidae</taxon>
        <taxon>Homo</taxon>
    </lineage>
</organism>
<dbReference type="EMBL" id="AK128250">
    <property type="protein sequence ID" value="BAC87353.1"/>
    <property type="molecule type" value="mRNA"/>
</dbReference>
<dbReference type="SMR" id="Q6ZRF7"/>
<dbReference type="iPTMnet" id="Q6ZRF7"/>
<dbReference type="BioMuta" id="HGNC:33265"/>
<dbReference type="DMDM" id="74758782"/>
<dbReference type="MassIVE" id="Q6ZRF7"/>
<dbReference type="PeptideAtlas" id="Q6ZRF7"/>
<dbReference type="ProteomicsDB" id="68122"/>
<dbReference type="AGR" id="HGNC:33265"/>
<dbReference type="GeneCards" id="ZNF818P"/>
<dbReference type="HGNC" id="HGNC:33265">
    <property type="gene designation" value="ZNF818P"/>
</dbReference>
<dbReference type="neXtProt" id="NX_Q6ZRF7"/>
<dbReference type="InParanoid" id="Q6ZRF7"/>
<dbReference type="PAN-GO" id="Q6ZRF7">
    <property type="GO annotations" value="3 GO annotations based on evolutionary models"/>
</dbReference>
<dbReference type="PhylomeDB" id="Q6ZRF7"/>
<dbReference type="PathwayCommons" id="Q6ZRF7"/>
<dbReference type="Pharos" id="Q6ZRF7">
    <property type="development level" value="Tdark"/>
</dbReference>
<dbReference type="Proteomes" id="UP000005640">
    <property type="component" value="Unplaced"/>
</dbReference>
<dbReference type="RNAct" id="Q6ZRF7">
    <property type="molecule type" value="protein"/>
</dbReference>
<dbReference type="GO" id="GO:0005634">
    <property type="term" value="C:nucleus"/>
    <property type="evidence" value="ECO:0007669"/>
    <property type="project" value="UniProtKB-SubCell"/>
</dbReference>
<dbReference type="GO" id="GO:0003677">
    <property type="term" value="F:DNA binding"/>
    <property type="evidence" value="ECO:0007669"/>
    <property type="project" value="UniProtKB-KW"/>
</dbReference>
<dbReference type="GO" id="GO:0003700">
    <property type="term" value="F:DNA-binding transcription factor activity"/>
    <property type="evidence" value="ECO:0000303"/>
    <property type="project" value="ARUK-UCL"/>
</dbReference>
<dbReference type="GO" id="GO:0008270">
    <property type="term" value="F:zinc ion binding"/>
    <property type="evidence" value="ECO:0007669"/>
    <property type="project" value="UniProtKB-KW"/>
</dbReference>
<dbReference type="FunFam" id="3.30.160.60:FF:002239">
    <property type="entry name" value="Zinc finger protein 226"/>
    <property type="match status" value="1"/>
</dbReference>
<dbReference type="FunFam" id="3.30.160.60:FF:000023">
    <property type="entry name" value="zinc finger protein 37 homolog"/>
    <property type="match status" value="1"/>
</dbReference>
<dbReference type="Gene3D" id="3.30.160.60">
    <property type="entry name" value="Classic Zinc Finger"/>
    <property type="match status" value="2"/>
</dbReference>
<dbReference type="InterPro" id="IPR036236">
    <property type="entry name" value="Znf_C2H2_sf"/>
</dbReference>
<dbReference type="InterPro" id="IPR013087">
    <property type="entry name" value="Znf_C2H2_type"/>
</dbReference>
<dbReference type="PANTHER" id="PTHR24399:SF71">
    <property type="entry name" value="NOVEL KRAB BOX AND ZINC FINGER, C2H2 TYPE DOMAIN CONTAINING PROTEIN-RELATED"/>
    <property type="match status" value="1"/>
</dbReference>
<dbReference type="PANTHER" id="PTHR24399">
    <property type="entry name" value="ZINC FINGER AND BTB DOMAIN-CONTAINING"/>
    <property type="match status" value="1"/>
</dbReference>
<dbReference type="Pfam" id="PF00096">
    <property type="entry name" value="zf-C2H2"/>
    <property type="match status" value="2"/>
</dbReference>
<dbReference type="SMART" id="SM00355">
    <property type="entry name" value="ZnF_C2H2"/>
    <property type="match status" value="2"/>
</dbReference>
<dbReference type="SUPFAM" id="SSF57667">
    <property type="entry name" value="beta-beta-alpha zinc fingers"/>
    <property type="match status" value="1"/>
</dbReference>
<dbReference type="PROSITE" id="PS00028">
    <property type="entry name" value="ZINC_FINGER_C2H2_1"/>
    <property type="match status" value="1"/>
</dbReference>
<dbReference type="PROSITE" id="PS50157">
    <property type="entry name" value="ZINC_FINGER_C2H2_2"/>
    <property type="match status" value="2"/>
</dbReference>
<protein>
    <recommendedName>
        <fullName>Putative zinc finger protein 818</fullName>
    </recommendedName>
</protein>
<comment type="function">
    <text>May be involved in transcriptional regulation.</text>
</comment>
<comment type="subcellular location">
    <subcellularLocation>
        <location evidence="2">Nucleus</location>
    </subcellularLocation>
</comment>
<comment type="similarity">
    <text evidence="2">Belongs to the krueppel C2H2-type zinc-finger protein family.</text>
</comment>
<comment type="caution">
    <text evidence="2">Could be the product of a pseudogene.</text>
</comment>
<evidence type="ECO:0000255" key="1">
    <source>
        <dbReference type="PROSITE-ProRule" id="PRU00042"/>
    </source>
</evidence>
<evidence type="ECO:0000305" key="2"/>
<sequence length="136" mass="15513">MLERNLTSMMSVEEPLPRPLTSLYIRLSILERNHMNMTYMAKSSVKIHISKVIIGFVLKRSLTNVCGKVLSQNSHLVNHQRIHTGEKSYRCHECGKAFTQGSRFINHQIVHTGENFPNVLNVARLLRMALNSGLTK</sequence>
<name>ZN818_HUMAN</name>
<proteinExistence type="uncertain"/>
<feature type="chain" id="PRO_0000294442" description="Putative zinc finger protein 818">
    <location>
        <begin position="1"/>
        <end position="136"/>
    </location>
</feature>
<feature type="zinc finger region" description="C2H2-type 1; degenerate" evidence="1">
    <location>
        <begin position="64"/>
        <end position="83"/>
    </location>
</feature>
<feature type="zinc finger region" description="C2H2-type 2" evidence="1">
    <location>
        <begin position="89"/>
        <end position="111"/>
    </location>
</feature>
<feature type="sequence variant" id="VAR_033182" description="In dbSNP:rs10853858.">
    <original>E</original>
    <variation>K</variation>
    <location>
        <position position="14"/>
    </location>
</feature>
<gene>
    <name type="primary">ZNF818P</name>
    <name type="synonym">ZNF818</name>
</gene>
<keyword id="KW-0238">DNA-binding</keyword>
<keyword id="KW-0479">Metal-binding</keyword>
<keyword id="KW-0539">Nucleus</keyword>
<keyword id="KW-1185">Reference proteome</keyword>
<keyword id="KW-0677">Repeat</keyword>
<keyword id="KW-0804">Transcription</keyword>
<keyword id="KW-0805">Transcription regulation</keyword>
<keyword id="KW-0862">Zinc</keyword>
<keyword id="KW-0863">Zinc-finger</keyword>
<accession>Q6ZRF7</accession>